<accession>B5ETN4</accession>
<reference key="1">
    <citation type="submission" date="2008-08" db="EMBL/GenBank/DDBJ databases">
        <title>Complete sequence of Vibrio fischeri strain MJ11.</title>
        <authorList>
            <person name="Mandel M.J."/>
            <person name="Stabb E.V."/>
            <person name="Ruby E.G."/>
            <person name="Ferriera S."/>
            <person name="Johnson J."/>
            <person name="Kravitz S."/>
            <person name="Beeson K."/>
            <person name="Sutton G."/>
            <person name="Rogers Y.-H."/>
            <person name="Friedman R."/>
            <person name="Frazier M."/>
            <person name="Venter J.C."/>
        </authorList>
    </citation>
    <scope>NUCLEOTIDE SEQUENCE [LARGE SCALE GENOMIC DNA]</scope>
    <source>
        <strain>MJ11</strain>
    </source>
</reference>
<comment type="function">
    <text evidence="1">Catalyzes the hydrolytic cleavage of the carbon-nitrogen bond in imidazolone-5-propanoate to yield N-formimidoyl-L-glutamate. It is the third step in the universal histidine degradation pathway.</text>
</comment>
<comment type="catalytic activity">
    <reaction evidence="1">
        <text>4-imidazolone-5-propanoate + H2O = N-formimidoyl-L-glutamate</text>
        <dbReference type="Rhea" id="RHEA:23660"/>
        <dbReference type="ChEBI" id="CHEBI:15377"/>
        <dbReference type="ChEBI" id="CHEBI:58928"/>
        <dbReference type="ChEBI" id="CHEBI:77893"/>
        <dbReference type="EC" id="3.5.2.7"/>
    </reaction>
</comment>
<comment type="cofactor">
    <cofactor evidence="1">
        <name>Zn(2+)</name>
        <dbReference type="ChEBI" id="CHEBI:29105"/>
    </cofactor>
    <cofactor evidence="1">
        <name>Fe(3+)</name>
        <dbReference type="ChEBI" id="CHEBI:29034"/>
    </cofactor>
    <text evidence="1">Binds 1 zinc or iron ion per subunit.</text>
</comment>
<comment type="pathway">
    <text evidence="1">Amino-acid degradation; L-histidine degradation into L-glutamate; N-formimidoyl-L-glutamate from L-histidine: step 3/3.</text>
</comment>
<comment type="subcellular location">
    <subcellularLocation>
        <location evidence="1">Cytoplasm</location>
    </subcellularLocation>
</comment>
<comment type="similarity">
    <text evidence="1">Belongs to the metallo-dependent hydrolases superfamily. HutI family.</text>
</comment>
<proteinExistence type="inferred from homology"/>
<gene>
    <name evidence="1" type="primary">hutI</name>
    <name type="ordered locus">VFMJ11_A0503</name>
</gene>
<sequence>MDRVFINLHLVSMVNKQQTGSDGYQVVKDVMIGVRNGKVEYVGEPCPSILHGHPDIIDCAHALVTPGFIDCHTHLIFAGNRANEFEQRLQGIPYEEIAKQGGGILSTVQATREASEDELYHLAVHRLEGLKRDGVTTIEIKSGYGLTLDDEIKMLKVVKRISELPDMKVSSTLLAAHAVPPEYKNRSDEYIDLICDTIIPQVVKLNLANHVDVFCEGIGFSTKQCERVFRTALKHGLRIKGHTEQLSNLGGSALAAAMGADSVDHIEYLDEHGVKALTKNNTVATLLPGAFYFLKETKLPPIALLRQYEVPMAIATDFNPGTSPIASLRTIMNMACTLFKLTPEESLRGVTCHAAQALGLQNFRGKIAVGMEADFAIWQLESPAELSYRLGVPDLIARVVDGEIFHEK</sequence>
<feature type="chain" id="PRO_1000121562" description="Imidazolonepropionase">
    <location>
        <begin position="1"/>
        <end position="408"/>
    </location>
</feature>
<feature type="binding site" evidence="1">
    <location>
        <position position="72"/>
    </location>
    <ligand>
        <name>Fe(3+)</name>
        <dbReference type="ChEBI" id="CHEBI:29034"/>
    </ligand>
</feature>
<feature type="binding site" evidence="1">
    <location>
        <position position="72"/>
    </location>
    <ligand>
        <name>Zn(2+)</name>
        <dbReference type="ChEBI" id="CHEBI:29105"/>
    </ligand>
</feature>
<feature type="binding site" evidence="1">
    <location>
        <position position="74"/>
    </location>
    <ligand>
        <name>Fe(3+)</name>
        <dbReference type="ChEBI" id="CHEBI:29034"/>
    </ligand>
</feature>
<feature type="binding site" evidence="1">
    <location>
        <position position="74"/>
    </location>
    <ligand>
        <name>Zn(2+)</name>
        <dbReference type="ChEBI" id="CHEBI:29105"/>
    </ligand>
</feature>
<feature type="binding site" evidence="1">
    <location>
        <position position="81"/>
    </location>
    <ligand>
        <name>4-imidazolone-5-propanoate</name>
        <dbReference type="ChEBI" id="CHEBI:77893"/>
    </ligand>
</feature>
<feature type="binding site" evidence="1">
    <location>
        <position position="144"/>
    </location>
    <ligand>
        <name>4-imidazolone-5-propanoate</name>
        <dbReference type="ChEBI" id="CHEBI:77893"/>
    </ligand>
</feature>
<feature type="binding site" evidence="1">
    <location>
        <position position="144"/>
    </location>
    <ligand>
        <name>N-formimidoyl-L-glutamate</name>
        <dbReference type="ChEBI" id="CHEBI:58928"/>
    </ligand>
</feature>
<feature type="binding site" evidence="1">
    <location>
        <position position="177"/>
    </location>
    <ligand>
        <name>4-imidazolone-5-propanoate</name>
        <dbReference type="ChEBI" id="CHEBI:77893"/>
    </ligand>
</feature>
<feature type="binding site" evidence="1">
    <location>
        <position position="242"/>
    </location>
    <ligand>
        <name>Fe(3+)</name>
        <dbReference type="ChEBI" id="CHEBI:29034"/>
    </ligand>
</feature>
<feature type="binding site" evidence="1">
    <location>
        <position position="242"/>
    </location>
    <ligand>
        <name>Zn(2+)</name>
        <dbReference type="ChEBI" id="CHEBI:29105"/>
    </ligand>
</feature>
<feature type="binding site" evidence="1">
    <location>
        <position position="245"/>
    </location>
    <ligand>
        <name>4-imidazolone-5-propanoate</name>
        <dbReference type="ChEBI" id="CHEBI:77893"/>
    </ligand>
</feature>
<feature type="binding site" evidence="1">
    <location>
        <position position="317"/>
    </location>
    <ligand>
        <name>Fe(3+)</name>
        <dbReference type="ChEBI" id="CHEBI:29034"/>
    </ligand>
</feature>
<feature type="binding site" evidence="1">
    <location>
        <position position="317"/>
    </location>
    <ligand>
        <name>Zn(2+)</name>
        <dbReference type="ChEBI" id="CHEBI:29105"/>
    </ligand>
</feature>
<feature type="binding site" evidence="1">
    <location>
        <position position="319"/>
    </location>
    <ligand>
        <name>N-formimidoyl-L-glutamate</name>
        <dbReference type="ChEBI" id="CHEBI:58928"/>
    </ligand>
</feature>
<feature type="binding site" evidence="1">
    <location>
        <position position="321"/>
    </location>
    <ligand>
        <name>N-formimidoyl-L-glutamate</name>
        <dbReference type="ChEBI" id="CHEBI:58928"/>
    </ligand>
</feature>
<feature type="binding site" evidence="1">
    <location>
        <position position="322"/>
    </location>
    <ligand>
        <name>4-imidazolone-5-propanoate</name>
        <dbReference type="ChEBI" id="CHEBI:77893"/>
    </ligand>
</feature>
<evidence type="ECO:0000255" key="1">
    <source>
        <dbReference type="HAMAP-Rule" id="MF_00372"/>
    </source>
</evidence>
<protein>
    <recommendedName>
        <fullName evidence="1">Imidazolonepropionase</fullName>
        <ecNumber evidence="1">3.5.2.7</ecNumber>
    </recommendedName>
    <alternativeName>
        <fullName evidence="1">Imidazolone-5-propionate hydrolase</fullName>
    </alternativeName>
</protein>
<name>HUTI_ALIFM</name>
<keyword id="KW-0963">Cytoplasm</keyword>
<keyword id="KW-0369">Histidine metabolism</keyword>
<keyword id="KW-0378">Hydrolase</keyword>
<keyword id="KW-0408">Iron</keyword>
<keyword id="KW-0479">Metal-binding</keyword>
<keyword id="KW-0862">Zinc</keyword>
<organism>
    <name type="scientific">Aliivibrio fischeri (strain MJ11)</name>
    <name type="common">Vibrio fischeri</name>
    <dbReference type="NCBI Taxonomy" id="388396"/>
    <lineage>
        <taxon>Bacteria</taxon>
        <taxon>Pseudomonadati</taxon>
        <taxon>Pseudomonadota</taxon>
        <taxon>Gammaproteobacteria</taxon>
        <taxon>Vibrionales</taxon>
        <taxon>Vibrionaceae</taxon>
        <taxon>Aliivibrio</taxon>
    </lineage>
</organism>
<dbReference type="EC" id="3.5.2.7" evidence="1"/>
<dbReference type="EMBL" id="CP001133">
    <property type="protein sequence ID" value="ACH63539.1"/>
    <property type="molecule type" value="Genomic_DNA"/>
</dbReference>
<dbReference type="RefSeq" id="WP_012534748.1">
    <property type="nucleotide sequence ID" value="NC_011186.1"/>
</dbReference>
<dbReference type="SMR" id="B5ETN4"/>
<dbReference type="KEGG" id="vfm:VFMJ11_A0503"/>
<dbReference type="HOGENOM" id="CLU_041647_0_0_6"/>
<dbReference type="UniPathway" id="UPA00379">
    <property type="reaction ID" value="UER00551"/>
</dbReference>
<dbReference type="Proteomes" id="UP000001857">
    <property type="component" value="Chromosome II"/>
</dbReference>
<dbReference type="GO" id="GO:0005737">
    <property type="term" value="C:cytoplasm"/>
    <property type="evidence" value="ECO:0007669"/>
    <property type="project" value="UniProtKB-SubCell"/>
</dbReference>
<dbReference type="GO" id="GO:0050480">
    <property type="term" value="F:imidazolonepropionase activity"/>
    <property type="evidence" value="ECO:0007669"/>
    <property type="project" value="UniProtKB-UniRule"/>
</dbReference>
<dbReference type="GO" id="GO:0005506">
    <property type="term" value="F:iron ion binding"/>
    <property type="evidence" value="ECO:0007669"/>
    <property type="project" value="UniProtKB-UniRule"/>
</dbReference>
<dbReference type="GO" id="GO:0008270">
    <property type="term" value="F:zinc ion binding"/>
    <property type="evidence" value="ECO:0007669"/>
    <property type="project" value="UniProtKB-UniRule"/>
</dbReference>
<dbReference type="GO" id="GO:0019556">
    <property type="term" value="P:L-histidine catabolic process to glutamate and formamide"/>
    <property type="evidence" value="ECO:0007669"/>
    <property type="project" value="UniProtKB-UniPathway"/>
</dbReference>
<dbReference type="GO" id="GO:0019557">
    <property type="term" value="P:L-histidine catabolic process to glutamate and formate"/>
    <property type="evidence" value="ECO:0007669"/>
    <property type="project" value="UniProtKB-UniPathway"/>
</dbReference>
<dbReference type="CDD" id="cd01296">
    <property type="entry name" value="Imidazolone-5PH"/>
    <property type="match status" value="1"/>
</dbReference>
<dbReference type="FunFam" id="3.20.20.140:FF:000007">
    <property type="entry name" value="Imidazolonepropionase"/>
    <property type="match status" value="1"/>
</dbReference>
<dbReference type="Gene3D" id="3.20.20.140">
    <property type="entry name" value="Metal-dependent hydrolases"/>
    <property type="match status" value="1"/>
</dbReference>
<dbReference type="Gene3D" id="2.30.40.10">
    <property type="entry name" value="Urease, subunit C, domain 1"/>
    <property type="match status" value="1"/>
</dbReference>
<dbReference type="HAMAP" id="MF_00372">
    <property type="entry name" value="HutI"/>
    <property type="match status" value="1"/>
</dbReference>
<dbReference type="InterPro" id="IPR006680">
    <property type="entry name" value="Amidohydro-rel"/>
</dbReference>
<dbReference type="InterPro" id="IPR005920">
    <property type="entry name" value="HutI"/>
</dbReference>
<dbReference type="InterPro" id="IPR011059">
    <property type="entry name" value="Metal-dep_hydrolase_composite"/>
</dbReference>
<dbReference type="InterPro" id="IPR032466">
    <property type="entry name" value="Metal_Hydrolase"/>
</dbReference>
<dbReference type="NCBIfam" id="TIGR01224">
    <property type="entry name" value="hutI"/>
    <property type="match status" value="1"/>
</dbReference>
<dbReference type="PANTHER" id="PTHR42752">
    <property type="entry name" value="IMIDAZOLONEPROPIONASE"/>
    <property type="match status" value="1"/>
</dbReference>
<dbReference type="PANTHER" id="PTHR42752:SF1">
    <property type="entry name" value="IMIDAZOLONEPROPIONASE-RELATED"/>
    <property type="match status" value="1"/>
</dbReference>
<dbReference type="Pfam" id="PF01979">
    <property type="entry name" value="Amidohydro_1"/>
    <property type="match status" value="1"/>
</dbReference>
<dbReference type="SUPFAM" id="SSF51338">
    <property type="entry name" value="Composite domain of metallo-dependent hydrolases"/>
    <property type="match status" value="1"/>
</dbReference>
<dbReference type="SUPFAM" id="SSF51556">
    <property type="entry name" value="Metallo-dependent hydrolases"/>
    <property type="match status" value="1"/>
</dbReference>